<accession>P64714</accession>
<accession>A0A1R3XVI2</accession>
<accession>Q11160</accession>
<accession>X2BF95</accession>
<comment type="function">
    <text evidence="1">Essential for maintaining intracellular redox homeostasis.</text>
</comment>
<comment type="similarity">
    <text evidence="2">Belongs to the Rv0495c family.</text>
</comment>
<reference key="1">
    <citation type="journal article" date="2003" name="Proc. Natl. Acad. Sci. U.S.A.">
        <title>The complete genome sequence of Mycobacterium bovis.</title>
        <authorList>
            <person name="Garnier T."/>
            <person name="Eiglmeier K."/>
            <person name="Camus J.-C."/>
            <person name="Medina N."/>
            <person name="Mansoor H."/>
            <person name="Pryor M."/>
            <person name="Duthoy S."/>
            <person name="Grondin S."/>
            <person name="Lacroix C."/>
            <person name="Monsempe C."/>
            <person name="Simon S."/>
            <person name="Harris B."/>
            <person name="Atkin R."/>
            <person name="Doggett J."/>
            <person name="Mayes R."/>
            <person name="Keating L."/>
            <person name="Wheeler P.R."/>
            <person name="Parkhill J."/>
            <person name="Barrell B.G."/>
            <person name="Cole S.T."/>
            <person name="Gordon S.V."/>
            <person name="Hewinson R.G."/>
        </authorList>
    </citation>
    <scope>NUCLEOTIDE SEQUENCE [LARGE SCALE GENOMIC DNA]</scope>
    <source>
        <strain>ATCC BAA-935 / AF2122/97</strain>
    </source>
</reference>
<reference key="2">
    <citation type="journal article" date="2017" name="Genome Announc.">
        <title>Updated reference genome sequence and annotation of Mycobacterium bovis AF2122/97.</title>
        <authorList>
            <person name="Malone K.M."/>
            <person name="Farrell D."/>
            <person name="Stuber T.P."/>
            <person name="Schubert O.T."/>
            <person name="Aebersold R."/>
            <person name="Robbe-Austerman S."/>
            <person name="Gordon S.V."/>
        </authorList>
    </citation>
    <scope>NUCLEOTIDE SEQUENCE [LARGE SCALE GENOMIC DNA]</scope>
    <scope>GENOME REANNOTATION</scope>
    <source>
        <strain>ATCC BAA-935 / AF2122/97</strain>
    </source>
</reference>
<evidence type="ECO:0000250" key="1">
    <source>
        <dbReference type="UniProtKB" id="P9WKU5"/>
    </source>
</evidence>
<evidence type="ECO:0000305" key="2"/>
<organism>
    <name type="scientific">Mycobacterium bovis (strain ATCC BAA-935 / AF2122/97)</name>
    <dbReference type="NCBI Taxonomy" id="233413"/>
    <lineage>
        <taxon>Bacteria</taxon>
        <taxon>Bacillati</taxon>
        <taxon>Actinomycetota</taxon>
        <taxon>Actinomycetes</taxon>
        <taxon>Mycobacteriales</taxon>
        <taxon>Mycobacteriaceae</taxon>
        <taxon>Mycobacterium</taxon>
        <taxon>Mycobacterium tuberculosis complex</taxon>
    </lineage>
</organism>
<protein>
    <recommendedName>
        <fullName evidence="1">Probable redox regulatory protein BQ2027_MB0506C</fullName>
    </recommendedName>
</protein>
<feature type="chain" id="PRO_0000103696" description="Probable redox regulatory protein BQ2027_MB0506C">
    <location>
        <begin position="1"/>
        <end position="296"/>
    </location>
</feature>
<dbReference type="EMBL" id="LT708304">
    <property type="protein sequence ID" value="SIT99101.1"/>
    <property type="molecule type" value="Genomic_DNA"/>
</dbReference>
<dbReference type="RefSeq" id="NP_854169.1">
    <property type="nucleotide sequence ID" value="NC_002945.3"/>
</dbReference>
<dbReference type="SMR" id="P64714"/>
<dbReference type="PATRIC" id="fig|233413.5.peg.551"/>
<dbReference type="Proteomes" id="UP000001419">
    <property type="component" value="Chromosome"/>
</dbReference>
<gene>
    <name type="ordered locus">BQ2027_MB0506C</name>
</gene>
<keyword id="KW-1185">Reference proteome</keyword>
<name>RHRP_MYCBO</name>
<sequence length="296" mass="32992">MWRPAQGARWHVPAVLGYGGIPRRASWSNVESVANSRRRPVHPGQEVELDFAREWVEFYDPDNPEHLIAADLTWLLSRWACVFGTPACQGTVAGRPNDGCCSHGAFLSDDDDRTRLADAVHKLTDDDWQFRAKGLRRKGYLELDEHDGQPQHRTRKHKGACIFLNRPGFAGGAGCALHSKALKLGVPPLTMKPDVCWQLPIRRSQEWVTRPDGTEILKTTLTEYDRRGWGSGGADLHWYCTGDPAAHVGTKQVWQSLADELTELLGEKAYGELAAMCKRRSQLGLIAVHPATRAAQ</sequence>
<proteinExistence type="inferred from homology"/>